<name>PPNP_SULNB</name>
<proteinExistence type="inferred from homology"/>
<dbReference type="EC" id="2.4.2.1" evidence="1"/>
<dbReference type="EC" id="2.4.2.2" evidence="1"/>
<dbReference type="EMBL" id="AP009179">
    <property type="protein sequence ID" value="BAF73332.1"/>
    <property type="molecule type" value="Genomic_DNA"/>
</dbReference>
<dbReference type="RefSeq" id="WP_012084174.1">
    <property type="nucleotide sequence ID" value="NC_009663.1"/>
</dbReference>
<dbReference type="SMR" id="A6QCX3"/>
<dbReference type="STRING" id="387093.SUN_2396"/>
<dbReference type="KEGG" id="sun:SUN_2396"/>
<dbReference type="eggNOG" id="COG3123">
    <property type="taxonomic scope" value="Bacteria"/>
</dbReference>
<dbReference type="HOGENOM" id="CLU_157874_1_0_7"/>
<dbReference type="OrthoDB" id="9793848at2"/>
<dbReference type="Proteomes" id="UP000006378">
    <property type="component" value="Chromosome"/>
</dbReference>
<dbReference type="GO" id="GO:0005829">
    <property type="term" value="C:cytosol"/>
    <property type="evidence" value="ECO:0007669"/>
    <property type="project" value="TreeGrafter"/>
</dbReference>
<dbReference type="GO" id="GO:0047975">
    <property type="term" value="F:guanosine phosphorylase activity"/>
    <property type="evidence" value="ECO:0007669"/>
    <property type="project" value="UniProtKB-EC"/>
</dbReference>
<dbReference type="GO" id="GO:0004731">
    <property type="term" value="F:purine-nucleoside phosphorylase activity"/>
    <property type="evidence" value="ECO:0007669"/>
    <property type="project" value="UniProtKB-UniRule"/>
</dbReference>
<dbReference type="GO" id="GO:0009032">
    <property type="term" value="F:thymidine phosphorylase activity"/>
    <property type="evidence" value="ECO:0007669"/>
    <property type="project" value="UniProtKB-EC"/>
</dbReference>
<dbReference type="GO" id="GO:0004850">
    <property type="term" value="F:uridine phosphorylase activity"/>
    <property type="evidence" value="ECO:0007669"/>
    <property type="project" value="UniProtKB-EC"/>
</dbReference>
<dbReference type="CDD" id="cd20296">
    <property type="entry name" value="cupin_PpnP-like"/>
    <property type="match status" value="1"/>
</dbReference>
<dbReference type="FunFam" id="2.60.120.10:FF:000016">
    <property type="entry name" value="Pyrimidine/purine nucleoside phosphorylase"/>
    <property type="match status" value="1"/>
</dbReference>
<dbReference type="Gene3D" id="2.60.120.10">
    <property type="entry name" value="Jelly Rolls"/>
    <property type="match status" value="1"/>
</dbReference>
<dbReference type="HAMAP" id="MF_01537">
    <property type="entry name" value="Nucleos_phosphorylase_PpnP"/>
    <property type="match status" value="1"/>
</dbReference>
<dbReference type="InterPro" id="IPR009664">
    <property type="entry name" value="Ppnp"/>
</dbReference>
<dbReference type="InterPro" id="IPR014710">
    <property type="entry name" value="RmlC-like_jellyroll"/>
</dbReference>
<dbReference type="InterPro" id="IPR011051">
    <property type="entry name" value="RmlC_Cupin_sf"/>
</dbReference>
<dbReference type="PANTHER" id="PTHR36540">
    <property type="entry name" value="PYRIMIDINE/PURINE NUCLEOSIDE PHOSPHORYLASE"/>
    <property type="match status" value="1"/>
</dbReference>
<dbReference type="PANTHER" id="PTHR36540:SF1">
    <property type="entry name" value="PYRIMIDINE_PURINE NUCLEOSIDE PHOSPHORYLASE"/>
    <property type="match status" value="1"/>
</dbReference>
<dbReference type="Pfam" id="PF06865">
    <property type="entry name" value="Ppnp"/>
    <property type="match status" value="1"/>
</dbReference>
<dbReference type="SUPFAM" id="SSF51182">
    <property type="entry name" value="RmlC-like cupins"/>
    <property type="match status" value="1"/>
</dbReference>
<comment type="function">
    <text evidence="1">Catalyzes the phosphorolysis of diverse nucleosides, yielding D-ribose 1-phosphate and the respective free bases. Can use uridine, adenosine, guanosine, cytidine, thymidine, inosine and xanthosine as substrates. Also catalyzes the reverse reactions.</text>
</comment>
<comment type="catalytic activity">
    <reaction evidence="1">
        <text>a purine D-ribonucleoside + phosphate = a purine nucleobase + alpha-D-ribose 1-phosphate</text>
        <dbReference type="Rhea" id="RHEA:19805"/>
        <dbReference type="ChEBI" id="CHEBI:26386"/>
        <dbReference type="ChEBI" id="CHEBI:43474"/>
        <dbReference type="ChEBI" id="CHEBI:57720"/>
        <dbReference type="ChEBI" id="CHEBI:142355"/>
        <dbReference type="EC" id="2.4.2.1"/>
    </reaction>
</comment>
<comment type="catalytic activity">
    <reaction evidence="1">
        <text>adenosine + phosphate = alpha-D-ribose 1-phosphate + adenine</text>
        <dbReference type="Rhea" id="RHEA:27642"/>
        <dbReference type="ChEBI" id="CHEBI:16335"/>
        <dbReference type="ChEBI" id="CHEBI:16708"/>
        <dbReference type="ChEBI" id="CHEBI:43474"/>
        <dbReference type="ChEBI" id="CHEBI:57720"/>
        <dbReference type="EC" id="2.4.2.1"/>
    </reaction>
</comment>
<comment type="catalytic activity">
    <reaction evidence="1">
        <text>cytidine + phosphate = cytosine + alpha-D-ribose 1-phosphate</text>
        <dbReference type="Rhea" id="RHEA:52540"/>
        <dbReference type="ChEBI" id="CHEBI:16040"/>
        <dbReference type="ChEBI" id="CHEBI:17562"/>
        <dbReference type="ChEBI" id="CHEBI:43474"/>
        <dbReference type="ChEBI" id="CHEBI:57720"/>
        <dbReference type="EC" id="2.4.2.2"/>
    </reaction>
</comment>
<comment type="catalytic activity">
    <reaction evidence="1">
        <text>guanosine + phosphate = alpha-D-ribose 1-phosphate + guanine</text>
        <dbReference type="Rhea" id="RHEA:13233"/>
        <dbReference type="ChEBI" id="CHEBI:16235"/>
        <dbReference type="ChEBI" id="CHEBI:16750"/>
        <dbReference type="ChEBI" id="CHEBI:43474"/>
        <dbReference type="ChEBI" id="CHEBI:57720"/>
        <dbReference type="EC" id="2.4.2.1"/>
    </reaction>
</comment>
<comment type="catalytic activity">
    <reaction evidence="1">
        <text>inosine + phosphate = alpha-D-ribose 1-phosphate + hypoxanthine</text>
        <dbReference type="Rhea" id="RHEA:27646"/>
        <dbReference type="ChEBI" id="CHEBI:17368"/>
        <dbReference type="ChEBI" id="CHEBI:17596"/>
        <dbReference type="ChEBI" id="CHEBI:43474"/>
        <dbReference type="ChEBI" id="CHEBI:57720"/>
        <dbReference type="EC" id="2.4.2.1"/>
    </reaction>
</comment>
<comment type="catalytic activity">
    <reaction evidence="1">
        <text>thymidine + phosphate = 2-deoxy-alpha-D-ribose 1-phosphate + thymine</text>
        <dbReference type="Rhea" id="RHEA:16037"/>
        <dbReference type="ChEBI" id="CHEBI:17748"/>
        <dbReference type="ChEBI" id="CHEBI:17821"/>
        <dbReference type="ChEBI" id="CHEBI:43474"/>
        <dbReference type="ChEBI" id="CHEBI:57259"/>
        <dbReference type="EC" id="2.4.2.2"/>
    </reaction>
</comment>
<comment type="catalytic activity">
    <reaction evidence="1">
        <text>uridine + phosphate = alpha-D-ribose 1-phosphate + uracil</text>
        <dbReference type="Rhea" id="RHEA:24388"/>
        <dbReference type="ChEBI" id="CHEBI:16704"/>
        <dbReference type="ChEBI" id="CHEBI:17568"/>
        <dbReference type="ChEBI" id="CHEBI:43474"/>
        <dbReference type="ChEBI" id="CHEBI:57720"/>
        <dbReference type="EC" id="2.4.2.2"/>
    </reaction>
</comment>
<comment type="catalytic activity">
    <reaction evidence="1">
        <text>xanthosine + phosphate = alpha-D-ribose 1-phosphate + xanthine</text>
        <dbReference type="Rhea" id="RHEA:27638"/>
        <dbReference type="ChEBI" id="CHEBI:17712"/>
        <dbReference type="ChEBI" id="CHEBI:18107"/>
        <dbReference type="ChEBI" id="CHEBI:43474"/>
        <dbReference type="ChEBI" id="CHEBI:57720"/>
        <dbReference type="EC" id="2.4.2.1"/>
    </reaction>
</comment>
<comment type="similarity">
    <text evidence="1">Belongs to the nucleoside phosphorylase PpnP family.</text>
</comment>
<reference key="1">
    <citation type="journal article" date="2007" name="Proc. Natl. Acad. Sci. U.S.A.">
        <title>Deep-sea vent epsilon-proteobacterial genomes provide insights into emergence of pathogens.</title>
        <authorList>
            <person name="Nakagawa S."/>
            <person name="Takaki Y."/>
            <person name="Shimamura S."/>
            <person name="Reysenbach A.-L."/>
            <person name="Takai K."/>
            <person name="Horikoshi K."/>
        </authorList>
    </citation>
    <scope>NUCLEOTIDE SEQUENCE [LARGE SCALE GENOMIC DNA]</scope>
    <source>
        <strain>NBC37-1</strain>
    </source>
</reference>
<protein>
    <recommendedName>
        <fullName evidence="1">Pyrimidine/purine nucleoside phosphorylase</fullName>
        <ecNumber evidence="1">2.4.2.1</ecNumber>
        <ecNumber evidence="1">2.4.2.2</ecNumber>
    </recommendedName>
    <alternativeName>
        <fullName evidence="1">Adenosine phosphorylase</fullName>
    </alternativeName>
    <alternativeName>
        <fullName evidence="1">Cytidine phosphorylase</fullName>
    </alternativeName>
    <alternativeName>
        <fullName evidence="1">Guanosine phosphorylase</fullName>
    </alternativeName>
    <alternativeName>
        <fullName evidence="1">Inosine phosphorylase</fullName>
    </alternativeName>
    <alternativeName>
        <fullName evidence="1">Thymidine phosphorylase</fullName>
    </alternativeName>
    <alternativeName>
        <fullName evidence="1">Uridine phosphorylase</fullName>
    </alternativeName>
    <alternativeName>
        <fullName evidence="1">Xanthosine phosphorylase</fullName>
    </alternativeName>
</protein>
<keyword id="KW-0328">Glycosyltransferase</keyword>
<keyword id="KW-0808">Transferase</keyword>
<sequence length="103" mass="11390">MKQFENVNVELEGNSYFDGAVTSRTVNFPDGSRKTLGFMLPGEYEFGTAAAELMEITSGELDVKLPGSDEWLSIKGGESFNVPADSKFQVKVKRVTDYCCSYL</sequence>
<evidence type="ECO:0000255" key="1">
    <source>
        <dbReference type="HAMAP-Rule" id="MF_01537"/>
    </source>
</evidence>
<accession>A6QCX3</accession>
<gene>
    <name evidence="1" type="primary">ppnP</name>
    <name type="ordered locus">SUN_2396</name>
</gene>
<organism>
    <name type="scientific">Sulfurovum sp. (strain NBC37-1)</name>
    <dbReference type="NCBI Taxonomy" id="387093"/>
    <lineage>
        <taxon>Bacteria</taxon>
        <taxon>Pseudomonadati</taxon>
        <taxon>Campylobacterota</taxon>
        <taxon>Epsilonproteobacteria</taxon>
        <taxon>Campylobacterales</taxon>
        <taxon>Sulfurovaceae</taxon>
        <taxon>Sulfurovum</taxon>
    </lineage>
</organism>
<feature type="chain" id="PRO_1000068740" description="Pyrimidine/purine nucleoside phosphorylase">
    <location>
        <begin position="1"/>
        <end position="103"/>
    </location>
</feature>